<gene>
    <name evidence="1" type="primary">hisF</name>
    <name type="ordered locus">Pcar_2684</name>
</gene>
<dbReference type="EC" id="4.3.2.10" evidence="1"/>
<dbReference type="EMBL" id="CP000142">
    <property type="protein sequence ID" value="ABA89920.1"/>
    <property type="molecule type" value="Genomic_DNA"/>
</dbReference>
<dbReference type="RefSeq" id="WP_011342463.1">
    <property type="nucleotide sequence ID" value="NC_007498.2"/>
</dbReference>
<dbReference type="SMR" id="Q3A137"/>
<dbReference type="STRING" id="338963.Pcar_2684"/>
<dbReference type="KEGG" id="pca:Pcar_2684"/>
<dbReference type="eggNOG" id="COG0107">
    <property type="taxonomic scope" value="Bacteria"/>
</dbReference>
<dbReference type="HOGENOM" id="CLU_048577_4_0_7"/>
<dbReference type="OrthoDB" id="9807749at2"/>
<dbReference type="UniPathway" id="UPA00031">
    <property type="reaction ID" value="UER00010"/>
</dbReference>
<dbReference type="Proteomes" id="UP000002534">
    <property type="component" value="Chromosome"/>
</dbReference>
<dbReference type="GO" id="GO:0005737">
    <property type="term" value="C:cytoplasm"/>
    <property type="evidence" value="ECO:0007669"/>
    <property type="project" value="UniProtKB-SubCell"/>
</dbReference>
<dbReference type="GO" id="GO:0000107">
    <property type="term" value="F:imidazoleglycerol-phosphate synthase activity"/>
    <property type="evidence" value="ECO:0007669"/>
    <property type="project" value="UniProtKB-UniRule"/>
</dbReference>
<dbReference type="GO" id="GO:0016833">
    <property type="term" value="F:oxo-acid-lyase activity"/>
    <property type="evidence" value="ECO:0007669"/>
    <property type="project" value="InterPro"/>
</dbReference>
<dbReference type="GO" id="GO:0000105">
    <property type="term" value="P:L-histidine biosynthetic process"/>
    <property type="evidence" value="ECO:0007669"/>
    <property type="project" value="UniProtKB-UniRule"/>
</dbReference>
<dbReference type="CDD" id="cd04731">
    <property type="entry name" value="HisF"/>
    <property type="match status" value="1"/>
</dbReference>
<dbReference type="FunFam" id="3.20.20.70:FF:000006">
    <property type="entry name" value="Imidazole glycerol phosphate synthase subunit HisF"/>
    <property type="match status" value="1"/>
</dbReference>
<dbReference type="Gene3D" id="3.20.20.70">
    <property type="entry name" value="Aldolase class I"/>
    <property type="match status" value="1"/>
</dbReference>
<dbReference type="HAMAP" id="MF_01013">
    <property type="entry name" value="HisF"/>
    <property type="match status" value="1"/>
</dbReference>
<dbReference type="InterPro" id="IPR013785">
    <property type="entry name" value="Aldolase_TIM"/>
</dbReference>
<dbReference type="InterPro" id="IPR020021">
    <property type="entry name" value="Glycosyl_amidation-assoc_WbuZ"/>
</dbReference>
<dbReference type="InterPro" id="IPR006062">
    <property type="entry name" value="His_biosynth"/>
</dbReference>
<dbReference type="InterPro" id="IPR004651">
    <property type="entry name" value="HisF"/>
</dbReference>
<dbReference type="InterPro" id="IPR050064">
    <property type="entry name" value="IGPS_HisA/HisF"/>
</dbReference>
<dbReference type="InterPro" id="IPR011060">
    <property type="entry name" value="RibuloseP-bd_barrel"/>
</dbReference>
<dbReference type="NCBIfam" id="TIGR00735">
    <property type="entry name" value="hisF"/>
    <property type="match status" value="1"/>
</dbReference>
<dbReference type="NCBIfam" id="TIGR03572">
    <property type="entry name" value="WbuZ"/>
    <property type="match status" value="1"/>
</dbReference>
<dbReference type="PANTHER" id="PTHR21235:SF2">
    <property type="entry name" value="IMIDAZOLE GLYCEROL PHOSPHATE SYNTHASE HISHF"/>
    <property type="match status" value="1"/>
</dbReference>
<dbReference type="PANTHER" id="PTHR21235">
    <property type="entry name" value="IMIDAZOLE GLYCEROL PHOSPHATE SYNTHASE SUBUNIT HISF/H IGP SYNTHASE SUBUNIT HISF/H"/>
    <property type="match status" value="1"/>
</dbReference>
<dbReference type="Pfam" id="PF00977">
    <property type="entry name" value="His_biosynth"/>
    <property type="match status" value="1"/>
</dbReference>
<dbReference type="SUPFAM" id="SSF51366">
    <property type="entry name" value="Ribulose-phoshate binding barrel"/>
    <property type="match status" value="1"/>
</dbReference>
<feature type="chain" id="PRO_0000142196" description="Imidazole glycerol phosphate synthase subunit HisF">
    <location>
        <begin position="1"/>
        <end position="255"/>
    </location>
</feature>
<feature type="active site" evidence="1">
    <location>
        <position position="11"/>
    </location>
</feature>
<feature type="active site" evidence="1">
    <location>
        <position position="130"/>
    </location>
</feature>
<comment type="function">
    <text evidence="1">IGPS catalyzes the conversion of PRFAR and glutamine to IGP, AICAR and glutamate. The HisF subunit catalyzes the cyclization activity that produces IGP and AICAR from PRFAR using the ammonia provided by the HisH subunit.</text>
</comment>
<comment type="catalytic activity">
    <reaction evidence="1">
        <text>5-[(5-phospho-1-deoxy-D-ribulos-1-ylimino)methylamino]-1-(5-phospho-beta-D-ribosyl)imidazole-4-carboxamide + L-glutamine = D-erythro-1-(imidazol-4-yl)glycerol 3-phosphate + 5-amino-1-(5-phospho-beta-D-ribosyl)imidazole-4-carboxamide + L-glutamate + H(+)</text>
        <dbReference type="Rhea" id="RHEA:24793"/>
        <dbReference type="ChEBI" id="CHEBI:15378"/>
        <dbReference type="ChEBI" id="CHEBI:29985"/>
        <dbReference type="ChEBI" id="CHEBI:58278"/>
        <dbReference type="ChEBI" id="CHEBI:58359"/>
        <dbReference type="ChEBI" id="CHEBI:58475"/>
        <dbReference type="ChEBI" id="CHEBI:58525"/>
        <dbReference type="EC" id="4.3.2.10"/>
    </reaction>
</comment>
<comment type="pathway">
    <text evidence="1">Amino-acid biosynthesis; L-histidine biosynthesis; L-histidine from 5-phospho-alpha-D-ribose 1-diphosphate: step 5/9.</text>
</comment>
<comment type="subunit">
    <text evidence="1">Heterodimer of HisH and HisF.</text>
</comment>
<comment type="subcellular location">
    <subcellularLocation>
        <location evidence="1">Cytoplasm</location>
    </subcellularLocation>
</comment>
<comment type="similarity">
    <text evidence="1">Belongs to the HisA/HisF family.</text>
</comment>
<proteinExistence type="inferred from homology"/>
<organism>
    <name type="scientific">Syntrophotalea carbinolica (strain DSM 2380 / NBRC 103641 / GraBd1)</name>
    <name type="common">Pelobacter carbinolicus</name>
    <dbReference type="NCBI Taxonomy" id="338963"/>
    <lineage>
        <taxon>Bacteria</taxon>
        <taxon>Pseudomonadati</taxon>
        <taxon>Thermodesulfobacteriota</taxon>
        <taxon>Desulfuromonadia</taxon>
        <taxon>Desulfuromonadales</taxon>
        <taxon>Syntrophotaleaceae</taxon>
        <taxon>Syntrophotalea</taxon>
    </lineage>
</organism>
<name>HIS6_SYNC1</name>
<protein>
    <recommendedName>
        <fullName evidence="1">Imidazole glycerol phosphate synthase subunit HisF</fullName>
        <ecNumber evidence="1">4.3.2.10</ecNumber>
    </recommendedName>
    <alternativeName>
        <fullName evidence="1">IGP synthase cyclase subunit</fullName>
    </alternativeName>
    <alternativeName>
        <fullName evidence="1">IGP synthase subunit HisF</fullName>
    </alternativeName>
    <alternativeName>
        <fullName evidence="1">ImGP synthase subunit HisF</fullName>
        <shortName evidence="1">IGPS subunit HisF</shortName>
    </alternativeName>
</protein>
<sequence length="255" mass="27774">MLTKRIIPCLDVKDGRVVKGVQFLELRDAGDPVEAAEAYDAQGADELTFLDITASSDKRNIILDVVSRTAERVFMPLTVGGGIRTIEDIRNLLNAGADKVSINTEAVNNPEFVKEAAERFGSQCIVVAIDARRVADSDPQRWEVYIHGGRTPTGIDAMEWAMRMEAYGAGEILLTSMDKDGTKDGYDIPLTRTISDLVSIPVIASGGVGNLEHIHQGLTEGGASAALAASIFHFREYTIHECKEYLQKRGVPARL</sequence>
<evidence type="ECO:0000255" key="1">
    <source>
        <dbReference type="HAMAP-Rule" id="MF_01013"/>
    </source>
</evidence>
<reference key="1">
    <citation type="submission" date="2005-10" db="EMBL/GenBank/DDBJ databases">
        <title>Complete sequence of Pelobacter carbinolicus DSM 2380.</title>
        <authorList>
            <person name="Copeland A."/>
            <person name="Lucas S."/>
            <person name="Lapidus A."/>
            <person name="Barry K."/>
            <person name="Detter J.C."/>
            <person name="Glavina T."/>
            <person name="Hammon N."/>
            <person name="Israni S."/>
            <person name="Pitluck S."/>
            <person name="Chertkov O."/>
            <person name="Schmutz J."/>
            <person name="Larimer F."/>
            <person name="Land M."/>
            <person name="Kyrpides N."/>
            <person name="Ivanova N."/>
            <person name="Richardson P."/>
        </authorList>
    </citation>
    <scope>NUCLEOTIDE SEQUENCE [LARGE SCALE GENOMIC DNA]</scope>
    <source>
        <strain>DSM 2380 / NBRC 103641 / GraBd1</strain>
    </source>
</reference>
<keyword id="KW-0028">Amino-acid biosynthesis</keyword>
<keyword id="KW-0963">Cytoplasm</keyword>
<keyword id="KW-0368">Histidine biosynthesis</keyword>
<keyword id="KW-0456">Lyase</keyword>
<keyword id="KW-1185">Reference proteome</keyword>
<accession>Q3A137</accession>